<feature type="chain" id="PRO_0000115745" description="Major DNA-binding protein">
    <location>
        <begin position="1"/>
        <end position="1196"/>
    </location>
</feature>
<feature type="zinc finger region" evidence="1">
    <location>
        <begin position="499"/>
        <end position="512"/>
    </location>
</feature>
<feature type="region of interest" description="Disordered" evidence="2">
    <location>
        <begin position="1158"/>
        <end position="1196"/>
    </location>
</feature>
<feature type="region of interest" description="Required for nuclear localization" evidence="1">
    <location>
        <begin position="1170"/>
        <end position="1196"/>
    </location>
</feature>
<feature type="short sequence motif" description="Required for filament formation" evidence="1">
    <location>
        <begin position="843"/>
        <end position="844"/>
    </location>
</feature>
<feature type="short sequence motif" description="Required for filament formation" evidence="1">
    <location>
        <begin position="1142"/>
        <end position="1144"/>
    </location>
</feature>
<feature type="compositionally biased region" description="Basic and acidic residues" evidence="2">
    <location>
        <begin position="1174"/>
        <end position="1196"/>
    </location>
</feature>
<gene>
    <name evidence="1" type="primary">DBP</name>
    <name type="synonym">ICP8</name>
    <name type="ORF">UL29</name>
</gene>
<proteinExistence type="inferred from homology"/>
<name>DNBI_HHV1K</name>
<organism>
    <name type="scientific">Human herpesvirus 1 (strain KOS)</name>
    <name type="common">HHV-1</name>
    <name type="synonym">Human herpes simplex virus 1</name>
    <dbReference type="NCBI Taxonomy" id="10306"/>
    <lineage>
        <taxon>Viruses</taxon>
        <taxon>Duplodnaviria</taxon>
        <taxon>Heunggongvirae</taxon>
        <taxon>Peploviricota</taxon>
        <taxon>Herviviricetes</taxon>
        <taxon>Herpesvirales</taxon>
        <taxon>Orthoherpesviridae</taxon>
        <taxon>Alphaherpesvirinae</taxon>
        <taxon>Simplexvirus</taxon>
        <taxon>Simplexvirus humanalpha1</taxon>
        <taxon>Human herpesvirus 1</taxon>
    </lineage>
</organism>
<protein>
    <recommendedName>
        <fullName evidence="1">Major DNA-binding protein</fullName>
    </recommendedName>
</protein>
<reference key="1">
    <citation type="journal article" date="1988" name="Virology">
        <title>Genetic identification of a portion of the herpes simplex virus ICP8 protein required for DNA-binding.</title>
        <authorList>
            <person name="Gao M."/>
            <person name="Bouchey J."/>
            <person name="Curtin K."/>
            <person name="Knipe D.M."/>
        </authorList>
    </citation>
    <scope>NUCLEOTIDE SEQUENCE [GENOMIC DNA]</scope>
</reference>
<keyword id="KW-0235">DNA replication</keyword>
<keyword id="KW-0238">DNA-binding</keyword>
<keyword id="KW-1048">Host nucleus</keyword>
<keyword id="KW-0479">Metal-binding</keyword>
<keyword id="KW-0862">Zinc</keyword>
<keyword id="KW-0863">Zinc-finger</keyword>
<organismHost>
    <name type="scientific">Homo sapiens</name>
    <name type="common">Human</name>
    <dbReference type="NCBI Taxonomy" id="9606"/>
</organismHost>
<sequence>METKPKTATTIKVPPGPLGYVYARACPSEGIELLALLSARSGDADVAVAPLVVGLTVESGFEANVAVVVGSRTTGLGGTAVSLKLTPSHYSSSVYVFHGGRHLDPSTQAPNLTRLCERARRHFGFSDYTPRPGDLKHETTGEALCERLGLDPDRALLYLVVTEGFKEAVCINNTFLHLGGSDKVTIGGAEVHRIPVYPLQLFMPDFSRVIAEPFNANHRSIGENFTYPLPFFNRPLNRLLFEAVVGPAAVALRCRNVDAVARAAAHLAFDENHEGAALPADITFTAFEASQGKTPRGGRDGGGKGPAGGFEQRLASVMAGDAALALESIVSMAVFDEPPTDISAWPLCEGQDTAAARANAVGAYLARAAGLVGAMVFSTNSALHLTEVDDAGPADPKDHSKPSFYRFFLVPGTHVAANPQVDREGHVVPGFEGRPTAPLVGGTQEFAGEHLAMLCGFSPALLAKMLFYLERCDGGVIVGRQEMDVFRYVADSNQTDVPCNLCTFDTRHACVHTTLMRLRARHPKFASAARGAIGVFGTMNSMYSDCDVLGNYAAFSALKRADGSETARTIMQETYRAATERVMAELETLQYVDQAVPTAMGRLETIITNREALHTVVNNVRQVVDREVEQLMRNLVEGRNFKFRDGLGEANHAMSLTLDPYACGPCPLLQLLGRRSNLAVYQDLALSQCHGVFAGQSVEGRNFRNQFQPVLRRRVMDMFNNGFLSAKTLTVALSEGAAICAPSLTAGQTAPAESSFEGDVARVTLGFPKELRVKSRVLFAGASANASEAAKARVASLQSAYQKPDKRVDILLGPLGFLLKQFHAAIFPNGKPPGSNQPNPQWFWTALQRNQLPARLLSREDIETIAFIKKFSLDYGAINFINLAPNNVSELAMYYMANQILRYCDHSTYFINTLTAIIAGSRRPPSVQAAAAWSAQGGAGLEAGARALMDAVDAHPGAWTSMFASCNLLRPVMAARPMVVLGLSISKYYGMAGNDRVFQAGNWASLMGGKNACPLLIFDRTRKFVLACPRAGFVCAASNLGGGAHESSLCEQLRGIISEGGAAVASSVFVATVKSLGPRTQQLQIEDWLALLEDEYLSEEMMELTARALERGNGEWSTDAALEVAHEAEALVSQLGNAGEVFNFGDFGCEDDNATPFGGPGAPGPAFAGRKRAFHGDDPFGEGPPDKKGDLTLDML</sequence>
<dbReference type="EMBL" id="M20165">
    <property type="protein sequence ID" value="AAA45793.1"/>
    <property type="molecule type" value="Genomic_DNA"/>
</dbReference>
<dbReference type="PIR" id="A28601">
    <property type="entry name" value="DNBEKS"/>
</dbReference>
<dbReference type="SMR" id="P17470"/>
<dbReference type="GO" id="GO:0042025">
    <property type="term" value="C:host cell nucleus"/>
    <property type="evidence" value="ECO:0007669"/>
    <property type="project" value="UniProtKB-SubCell"/>
</dbReference>
<dbReference type="GO" id="GO:0003697">
    <property type="term" value="F:single-stranded DNA binding"/>
    <property type="evidence" value="ECO:0007669"/>
    <property type="project" value="InterPro"/>
</dbReference>
<dbReference type="GO" id="GO:0008270">
    <property type="term" value="F:zinc ion binding"/>
    <property type="evidence" value="ECO:0007669"/>
    <property type="project" value="UniProtKB-KW"/>
</dbReference>
<dbReference type="GO" id="GO:0010792">
    <property type="term" value="P:DNA double-strand break processing involved in repair via single-strand annealing"/>
    <property type="evidence" value="ECO:0000315"/>
    <property type="project" value="CACAO"/>
</dbReference>
<dbReference type="GO" id="GO:0006260">
    <property type="term" value="P:DNA replication"/>
    <property type="evidence" value="ECO:0007669"/>
    <property type="project" value="UniProtKB-KW"/>
</dbReference>
<dbReference type="FunFam" id="1.20.190.40:FF:000001">
    <property type="entry name" value="Major DNA-binding protein"/>
    <property type="match status" value="1"/>
</dbReference>
<dbReference type="FunFam" id="1.20.190.40:FF:000002">
    <property type="entry name" value="Major DNA-binding protein"/>
    <property type="match status" value="1"/>
</dbReference>
<dbReference type="Gene3D" id="1.10.150.560">
    <property type="match status" value="1"/>
</dbReference>
<dbReference type="Gene3D" id="1.20.190.40">
    <property type="entry name" value="Viral ssDNA binding protein, head domain"/>
    <property type="match status" value="2"/>
</dbReference>
<dbReference type="HAMAP" id="MF_04007">
    <property type="entry name" value="HSV_DNBI"/>
    <property type="match status" value="1"/>
</dbReference>
<dbReference type="InterPro" id="IPR035989">
    <property type="entry name" value="DBP_sf"/>
</dbReference>
<dbReference type="InterPro" id="IPR043031">
    <property type="entry name" value="Viral_ssDBP_head"/>
</dbReference>
<dbReference type="InterPro" id="IPR000635">
    <property type="entry name" value="Viral_ssDNA-bd"/>
</dbReference>
<dbReference type="Pfam" id="PF00747">
    <property type="entry name" value="Viral_DNA_bp"/>
    <property type="match status" value="1"/>
</dbReference>
<dbReference type="SUPFAM" id="SSF118208">
    <property type="entry name" value="Viral ssDNA binding protein"/>
    <property type="match status" value="1"/>
</dbReference>
<evidence type="ECO:0000255" key="1">
    <source>
        <dbReference type="HAMAP-Rule" id="MF_04007"/>
    </source>
</evidence>
<evidence type="ECO:0000256" key="2">
    <source>
        <dbReference type="SAM" id="MobiDB-lite"/>
    </source>
</evidence>
<accession>P17470</accession>
<comment type="function">
    <text evidence="1">Plays several crucial roles in viral infection. Participates in the opening of the viral DNA origin to initiate replication by interacting with the origin-binding protein. May disrupt loops, hairpins and other secondary structures present on ssDNA to reduce and eliminate pausing of viral DNA polymerase at specific sites during elongation. Promotes viral DNA recombination by performing strand-transfer, characterized by the ability to transfer a DNA strand from a linear duplex to a complementary single-stranded DNA circle. Can also catalyze the renaturation of complementary single strands. Additionally, reorganizes the host cell nucleus, leading to the formation of prereplicative sites and replication compartments. This process is driven by the protein which can form double-helical filaments in the absence of DNA.</text>
</comment>
<comment type="subunit">
    <text evidence="1">Homooligomers. Forms double-helical filaments necessary for the formation of replication compartments within the host nucleus. Interacts with the origin-binding protein. Interacts with the helicase primase complex; this interaction stimulates primer synthesis activity of the helicase-primase complex. Interacts with the DNA polymerase. Interacts with the alkaline exonuclease; this interaction increases its nuclease processivity.</text>
</comment>
<comment type="subcellular location">
    <subcellularLocation>
        <location evidence="1">Host nucleus</location>
    </subcellularLocation>
    <text evidence="1">In the absence of DNA replication, found in the nuclear framework-associated structures (prereplicative sites). As viral DNA replication proceeds, it migrates to globular intranuclear structures (replication compartments).</text>
</comment>
<comment type="similarity">
    <text evidence="1">Belongs to the herpesviridae major DNA-binding protein family.</text>
</comment>